<organism>
    <name type="scientific">Haemophilus ducreyi (strain 35000HP / ATCC 700724)</name>
    <dbReference type="NCBI Taxonomy" id="233412"/>
    <lineage>
        <taxon>Bacteria</taxon>
        <taxon>Pseudomonadati</taxon>
        <taxon>Pseudomonadota</taxon>
        <taxon>Gammaproteobacteria</taxon>
        <taxon>Pasteurellales</taxon>
        <taxon>Pasteurellaceae</taxon>
        <taxon>Haemophilus</taxon>
    </lineage>
</organism>
<sequence length="217" mass="25004">MPETIENQACIVIAIAGASASGKSLIASTIYKELKEELDSNDIDIISEDAYYKDQTHLTMDEREQTNYDHPDSMVHYLLVEHLRQLKQGKPIQIPEYDYAKHNRKTSSKHFEPKKIIILEGILLLTHETIRNEINVSIFVDAPLDICFIRRLQRDLIERGRSMDSVISQCRKTVRPMFLKFIEPSKQYADIIIPKGGKNRIAIDILKAQIKQLLSKK</sequence>
<protein>
    <recommendedName>
        <fullName evidence="1">Uridine kinase</fullName>
        <ecNumber evidence="1">2.7.1.48</ecNumber>
    </recommendedName>
    <alternativeName>
        <fullName evidence="1">Cytidine monophosphokinase</fullName>
    </alternativeName>
    <alternativeName>
        <fullName evidence="1">Uridine monophosphokinase</fullName>
    </alternativeName>
</protein>
<name>URK_HAEDU</name>
<dbReference type="EC" id="2.7.1.48" evidence="1"/>
<dbReference type="EMBL" id="AE017143">
    <property type="protein sequence ID" value="AAP96432.1"/>
    <property type="molecule type" value="Genomic_DNA"/>
</dbReference>
<dbReference type="RefSeq" id="WP_010945464.1">
    <property type="nucleotide sequence ID" value="NC_002940.2"/>
</dbReference>
<dbReference type="SMR" id="Q7VL27"/>
<dbReference type="STRING" id="233412.HD_1660"/>
<dbReference type="KEGG" id="hdu:HD_1660"/>
<dbReference type="eggNOG" id="COG0572">
    <property type="taxonomic scope" value="Bacteria"/>
</dbReference>
<dbReference type="HOGENOM" id="CLU_021278_1_2_6"/>
<dbReference type="OrthoDB" id="9777642at2"/>
<dbReference type="UniPathway" id="UPA00574">
    <property type="reaction ID" value="UER00637"/>
</dbReference>
<dbReference type="UniPathway" id="UPA00579">
    <property type="reaction ID" value="UER00640"/>
</dbReference>
<dbReference type="Proteomes" id="UP000001022">
    <property type="component" value="Chromosome"/>
</dbReference>
<dbReference type="GO" id="GO:0005737">
    <property type="term" value="C:cytoplasm"/>
    <property type="evidence" value="ECO:0007669"/>
    <property type="project" value="UniProtKB-SubCell"/>
</dbReference>
<dbReference type="GO" id="GO:0005524">
    <property type="term" value="F:ATP binding"/>
    <property type="evidence" value="ECO:0007669"/>
    <property type="project" value="UniProtKB-UniRule"/>
</dbReference>
<dbReference type="GO" id="GO:0043771">
    <property type="term" value="F:cytidine kinase activity"/>
    <property type="evidence" value="ECO:0007669"/>
    <property type="project" value="RHEA"/>
</dbReference>
<dbReference type="GO" id="GO:0004849">
    <property type="term" value="F:uridine kinase activity"/>
    <property type="evidence" value="ECO:0007669"/>
    <property type="project" value="UniProtKB-UniRule"/>
</dbReference>
<dbReference type="GO" id="GO:0044211">
    <property type="term" value="P:CTP salvage"/>
    <property type="evidence" value="ECO:0007669"/>
    <property type="project" value="UniProtKB-UniRule"/>
</dbReference>
<dbReference type="GO" id="GO:0044206">
    <property type="term" value="P:UMP salvage"/>
    <property type="evidence" value="ECO:0007669"/>
    <property type="project" value="UniProtKB-UniRule"/>
</dbReference>
<dbReference type="CDD" id="cd02023">
    <property type="entry name" value="UMPK"/>
    <property type="match status" value="1"/>
</dbReference>
<dbReference type="Gene3D" id="3.40.50.300">
    <property type="entry name" value="P-loop containing nucleotide triphosphate hydrolases"/>
    <property type="match status" value="1"/>
</dbReference>
<dbReference type="HAMAP" id="MF_00551">
    <property type="entry name" value="Uridine_kinase"/>
    <property type="match status" value="1"/>
</dbReference>
<dbReference type="InterPro" id="IPR027417">
    <property type="entry name" value="P-loop_NTPase"/>
</dbReference>
<dbReference type="InterPro" id="IPR006083">
    <property type="entry name" value="PRK/URK"/>
</dbReference>
<dbReference type="InterPro" id="IPR026008">
    <property type="entry name" value="Uridine_kinase"/>
</dbReference>
<dbReference type="InterPro" id="IPR000764">
    <property type="entry name" value="Uridine_kinase-like"/>
</dbReference>
<dbReference type="NCBIfam" id="NF004018">
    <property type="entry name" value="PRK05480.1"/>
    <property type="match status" value="1"/>
</dbReference>
<dbReference type="NCBIfam" id="TIGR00235">
    <property type="entry name" value="udk"/>
    <property type="match status" value="1"/>
</dbReference>
<dbReference type="PANTHER" id="PTHR10285">
    <property type="entry name" value="URIDINE KINASE"/>
    <property type="match status" value="1"/>
</dbReference>
<dbReference type="Pfam" id="PF00485">
    <property type="entry name" value="PRK"/>
    <property type="match status" value="1"/>
</dbReference>
<dbReference type="PRINTS" id="PR00988">
    <property type="entry name" value="URIDINKINASE"/>
</dbReference>
<dbReference type="SUPFAM" id="SSF52540">
    <property type="entry name" value="P-loop containing nucleoside triphosphate hydrolases"/>
    <property type="match status" value="1"/>
</dbReference>
<feature type="chain" id="PRO_0000164473" description="Uridine kinase">
    <location>
        <begin position="1"/>
        <end position="217"/>
    </location>
</feature>
<feature type="binding site" evidence="1">
    <location>
        <begin position="17"/>
        <end position="24"/>
    </location>
    <ligand>
        <name>ATP</name>
        <dbReference type="ChEBI" id="CHEBI:30616"/>
    </ligand>
</feature>
<gene>
    <name evidence="1" type="primary">udk</name>
    <name type="ordered locus">HD_1660</name>
</gene>
<reference key="1">
    <citation type="submission" date="2003-06" db="EMBL/GenBank/DDBJ databases">
        <title>The complete genome sequence of Haemophilus ducreyi.</title>
        <authorList>
            <person name="Munson R.S. Jr."/>
            <person name="Ray W.C."/>
            <person name="Mahairas G."/>
            <person name="Sabo P."/>
            <person name="Mungur R."/>
            <person name="Johnson L."/>
            <person name="Nguyen D."/>
            <person name="Wang J."/>
            <person name="Forst C."/>
            <person name="Hood L."/>
        </authorList>
    </citation>
    <scope>NUCLEOTIDE SEQUENCE [LARGE SCALE GENOMIC DNA]</scope>
    <source>
        <strain>35000HP / ATCC 700724</strain>
    </source>
</reference>
<comment type="catalytic activity">
    <reaction evidence="1">
        <text>uridine + ATP = UMP + ADP + H(+)</text>
        <dbReference type="Rhea" id="RHEA:16825"/>
        <dbReference type="ChEBI" id="CHEBI:15378"/>
        <dbReference type="ChEBI" id="CHEBI:16704"/>
        <dbReference type="ChEBI" id="CHEBI:30616"/>
        <dbReference type="ChEBI" id="CHEBI:57865"/>
        <dbReference type="ChEBI" id="CHEBI:456216"/>
        <dbReference type="EC" id="2.7.1.48"/>
    </reaction>
</comment>
<comment type="catalytic activity">
    <reaction evidence="1">
        <text>cytidine + ATP = CMP + ADP + H(+)</text>
        <dbReference type="Rhea" id="RHEA:24674"/>
        <dbReference type="ChEBI" id="CHEBI:15378"/>
        <dbReference type="ChEBI" id="CHEBI:17562"/>
        <dbReference type="ChEBI" id="CHEBI:30616"/>
        <dbReference type="ChEBI" id="CHEBI:60377"/>
        <dbReference type="ChEBI" id="CHEBI:456216"/>
        <dbReference type="EC" id="2.7.1.48"/>
    </reaction>
</comment>
<comment type="pathway">
    <text evidence="1">Pyrimidine metabolism; CTP biosynthesis via salvage pathway; CTP from cytidine: step 1/3.</text>
</comment>
<comment type="pathway">
    <text evidence="1">Pyrimidine metabolism; UMP biosynthesis via salvage pathway; UMP from uridine: step 1/1.</text>
</comment>
<comment type="subcellular location">
    <subcellularLocation>
        <location evidence="1">Cytoplasm</location>
    </subcellularLocation>
</comment>
<comment type="similarity">
    <text evidence="1">Belongs to the uridine kinase family.</text>
</comment>
<accession>Q7VL27</accession>
<evidence type="ECO:0000255" key="1">
    <source>
        <dbReference type="HAMAP-Rule" id="MF_00551"/>
    </source>
</evidence>
<proteinExistence type="inferred from homology"/>
<keyword id="KW-0067">ATP-binding</keyword>
<keyword id="KW-0963">Cytoplasm</keyword>
<keyword id="KW-0418">Kinase</keyword>
<keyword id="KW-0547">Nucleotide-binding</keyword>
<keyword id="KW-1185">Reference proteome</keyword>
<keyword id="KW-0808">Transferase</keyword>